<evidence type="ECO:0000255" key="1">
    <source>
        <dbReference type="HAMAP-Rule" id="MF_00060"/>
    </source>
</evidence>
<proteinExistence type="inferred from homology"/>
<comment type="function">
    <text evidence="1">Nucleotidase that shows phosphatase activity on nucleoside 5'-monophosphates.</text>
</comment>
<comment type="catalytic activity">
    <reaction evidence="1">
        <text>a ribonucleoside 5'-phosphate + H2O = a ribonucleoside + phosphate</text>
        <dbReference type="Rhea" id="RHEA:12484"/>
        <dbReference type="ChEBI" id="CHEBI:15377"/>
        <dbReference type="ChEBI" id="CHEBI:18254"/>
        <dbReference type="ChEBI" id="CHEBI:43474"/>
        <dbReference type="ChEBI" id="CHEBI:58043"/>
        <dbReference type="EC" id="3.1.3.5"/>
    </reaction>
</comment>
<comment type="cofactor">
    <cofactor evidence="1">
        <name>a divalent metal cation</name>
        <dbReference type="ChEBI" id="CHEBI:60240"/>
    </cofactor>
    <text evidence="1">Binds 1 divalent metal cation per subunit.</text>
</comment>
<comment type="subcellular location">
    <subcellularLocation>
        <location evidence="1">Cytoplasm</location>
    </subcellularLocation>
</comment>
<comment type="similarity">
    <text evidence="1">Belongs to the SurE nucleotidase family.</text>
</comment>
<gene>
    <name evidence="1" type="primary">surE</name>
    <name type="ordered locus">BMA10229_A0050</name>
</gene>
<sequence>MRILLSNDDGYLAPGLAALYEALRPLAEILVMAPEQNCSGASNSLTLSRPLSVSRSAATGFYYVNGTPTDSVHVALTGMLDTKPDLVVSGINNGQNMGDDTLYSGTVAAATEGIMFGVPAIAFSLVHKEWAHLGDAARVAAEIVRHYLDHPLPGQPLLNVNIPNLPYEELKGWRVTRLGKRHPSQPVIRQTNPRGEPIYWIGAAGDALDASEGTDFHATASGYVSITPLQLDLTHTQMLGATRDWARAGSGAS</sequence>
<name>SURE_BURM9</name>
<feature type="chain" id="PRO_1000007707" description="5'-nucleotidase SurE">
    <location>
        <begin position="1"/>
        <end position="253"/>
    </location>
</feature>
<feature type="binding site" evidence="1">
    <location>
        <position position="8"/>
    </location>
    <ligand>
        <name>a divalent metal cation</name>
        <dbReference type="ChEBI" id="CHEBI:60240"/>
    </ligand>
</feature>
<feature type="binding site" evidence="1">
    <location>
        <position position="9"/>
    </location>
    <ligand>
        <name>a divalent metal cation</name>
        <dbReference type="ChEBI" id="CHEBI:60240"/>
    </ligand>
</feature>
<feature type="binding site" evidence="1">
    <location>
        <position position="39"/>
    </location>
    <ligand>
        <name>a divalent metal cation</name>
        <dbReference type="ChEBI" id="CHEBI:60240"/>
    </ligand>
</feature>
<feature type="binding site" evidence="1">
    <location>
        <position position="92"/>
    </location>
    <ligand>
        <name>a divalent metal cation</name>
        <dbReference type="ChEBI" id="CHEBI:60240"/>
    </ligand>
</feature>
<dbReference type="EC" id="3.1.3.5" evidence="1"/>
<dbReference type="EMBL" id="CP000546">
    <property type="protein sequence ID" value="ABN02093.1"/>
    <property type="molecule type" value="Genomic_DNA"/>
</dbReference>
<dbReference type="RefSeq" id="WP_004198595.1">
    <property type="nucleotide sequence ID" value="NC_008836.1"/>
</dbReference>
<dbReference type="SMR" id="A2S290"/>
<dbReference type="GeneID" id="92979090"/>
<dbReference type="KEGG" id="bml:BMA10229_A0050"/>
<dbReference type="HOGENOM" id="CLU_045192_1_2_4"/>
<dbReference type="Proteomes" id="UP000002283">
    <property type="component" value="Chromosome I"/>
</dbReference>
<dbReference type="GO" id="GO:0005737">
    <property type="term" value="C:cytoplasm"/>
    <property type="evidence" value="ECO:0007669"/>
    <property type="project" value="UniProtKB-SubCell"/>
</dbReference>
<dbReference type="GO" id="GO:0008254">
    <property type="term" value="F:3'-nucleotidase activity"/>
    <property type="evidence" value="ECO:0007669"/>
    <property type="project" value="TreeGrafter"/>
</dbReference>
<dbReference type="GO" id="GO:0008253">
    <property type="term" value="F:5'-nucleotidase activity"/>
    <property type="evidence" value="ECO:0007669"/>
    <property type="project" value="UniProtKB-UniRule"/>
</dbReference>
<dbReference type="GO" id="GO:0004309">
    <property type="term" value="F:exopolyphosphatase activity"/>
    <property type="evidence" value="ECO:0007669"/>
    <property type="project" value="TreeGrafter"/>
</dbReference>
<dbReference type="GO" id="GO:0046872">
    <property type="term" value="F:metal ion binding"/>
    <property type="evidence" value="ECO:0007669"/>
    <property type="project" value="UniProtKB-UniRule"/>
</dbReference>
<dbReference type="GO" id="GO:0000166">
    <property type="term" value="F:nucleotide binding"/>
    <property type="evidence" value="ECO:0007669"/>
    <property type="project" value="UniProtKB-KW"/>
</dbReference>
<dbReference type="FunFam" id="3.40.1210.10:FF:000001">
    <property type="entry name" value="5'/3'-nucleotidase SurE"/>
    <property type="match status" value="1"/>
</dbReference>
<dbReference type="Gene3D" id="3.40.1210.10">
    <property type="entry name" value="Survival protein SurE-like phosphatase/nucleotidase"/>
    <property type="match status" value="1"/>
</dbReference>
<dbReference type="HAMAP" id="MF_00060">
    <property type="entry name" value="SurE"/>
    <property type="match status" value="1"/>
</dbReference>
<dbReference type="InterPro" id="IPR030048">
    <property type="entry name" value="SurE"/>
</dbReference>
<dbReference type="InterPro" id="IPR002828">
    <property type="entry name" value="SurE-like_Pase/nucleotidase"/>
</dbReference>
<dbReference type="InterPro" id="IPR036523">
    <property type="entry name" value="SurE-like_sf"/>
</dbReference>
<dbReference type="NCBIfam" id="NF001489">
    <property type="entry name" value="PRK00346.1-3"/>
    <property type="match status" value="1"/>
</dbReference>
<dbReference type="NCBIfam" id="NF001490">
    <property type="entry name" value="PRK00346.1-4"/>
    <property type="match status" value="1"/>
</dbReference>
<dbReference type="NCBIfam" id="TIGR00087">
    <property type="entry name" value="surE"/>
    <property type="match status" value="1"/>
</dbReference>
<dbReference type="PANTHER" id="PTHR30457">
    <property type="entry name" value="5'-NUCLEOTIDASE SURE"/>
    <property type="match status" value="1"/>
</dbReference>
<dbReference type="PANTHER" id="PTHR30457:SF12">
    <property type="entry name" value="5'_3'-NUCLEOTIDASE SURE"/>
    <property type="match status" value="1"/>
</dbReference>
<dbReference type="Pfam" id="PF01975">
    <property type="entry name" value="SurE"/>
    <property type="match status" value="1"/>
</dbReference>
<dbReference type="SUPFAM" id="SSF64167">
    <property type="entry name" value="SurE-like"/>
    <property type="match status" value="1"/>
</dbReference>
<protein>
    <recommendedName>
        <fullName evidence="1">5'-nucleotidase SurE</fullName>
        <ecNumber evidence="1">3.1.3.5</ecNumber>
    </recommendedName>
    <alternativeName>
        <fullName evidence="1">Nucleoside 5'-monophosphate phosphohydrolase</fullName>
    </alternativeName>
</protein>
<reference key="1">
    <citation type="journal article" date="2010" name="Genome Biol. Evol.">
        <title>Continuing evolution of Burkholderia mallei through genome reduction and large-scale rearrangements.</title>
        <authorList>
            <person name="Losada L."/>
            <person name="Ronning C.M."/>
            <person name="DeShazer D."/>
            <person name="Woods D."/>
            <person name="Fedorova N."/>
            <person name="Kim H.S."/>
            <person name="Shabalina S.A."/>
            <person name="Pearson T.R."/>
            <person name="Brinkac L."/>
            <person name="Tan P."/>
            <person name="Nandi T."/>
            <person name="Crabtree J."/>
            <person name="Badger J."/>
            <person name="Beckstrom-Sternberg S."/>
            <person name="Saqib M."/>
            <person name="Schutzer S.E."/>
            <person name="Keim P."/>
            <person name="Nierman W.C."/>
        </authorList>
    </citation>
    <scope>NUCLEOTIDE SEQUENCE [LARGE SCALE GENOMIC DNA]</scope>
    <source>
        <strain>NCTC 10229</strain>
    </source>
</reference>
<accession>A2S290</accession>
<organism>
    <name type="scientific">Burkholderia mallei (strain NCTC 10229)</name>
    <dbReference type="NCBI Taxonomy" id="412022"/>
    <lineage>
        <taxon>Bacteria</taxon>
        <taxon>Pseudomonadati</taxon>
        <taxon>Pseudomonadota</taxon>
        <taxon>Betaproteobacteria</taxon>
        <taxon>Burkholderiales</taxon>
        <taxon>Burkholderiaceae</taxon>
        <taxon>Burkholderia</taxon>
        <taxon>pseudomallei group</taxon>
    </lineage>
</organism>
<keyword id="KW-0963">Cytoplasm</keyword>
<keyword id="KW-0378">Hydrolase</keyword>
<keyword id="KW-0479">Metal-binding</keyword>
<keyword id="KW-0547">Nucleotide-binding</keyword>